<evidence type="ECO:0000250" key="1">
    <source>
        <dbReference type="UniProtKB" id="P29033"/>
    </source>
</evidence>
<evidence type="ECO:0000250" key="2">
    <source>
        <dbReference type="UniProtKB" id="Q00977"/>
    </source>
</evidence>
<evidence type="ECO:0000305" key="3"/>
<accession>Q8MIT8</accession>
<sequence>MDWGALQTILGGVNKYSTSIGKIWLTVLFIFRIMILVVAAKEVWGDEQADFVCNTLQPGCKNVCYDHYFPISHIRLWALQLIFVSTPALLVAMHVAYRRHEKKRKFIKGEIKNEFKDIEEIKTQKVRIEGSLWWTYTSSIFFRVVFEAAFMYVFYVMYDGFSMQRLVKCNAWPCPNTVDCFVSRPTEKTVFTVFMIAVSGICILLNVTELCYLLIRYCSGKSKKPV</sequence>
<organism>
    <name type="scientific">Macaca mulatta</name>
    <name type="common">Rhesus macaque</name>
    <dbReference type="NCBI Taxonomy" id="9544"/>
    <lineage>
        <taxon>Eukaryota</taxon>
        <taxon>Metazoa</taxon>
        <taxon>Chordata</taxon>
        <taxon>Craniata</taxon>
        <taxon>Vertebrata</taxon>
        <taxon>Euteleostomi</taxon>
        <taxon>Mammalia</taxon>
        <taxon>Eutheria</taxon>
        <taxon>Euarchontoglires</taxon>
        <taxon>Primates</taxon>
        <taxon>Haplorrhini</taxon>
        <taxon>Catarrhini</taxon>
        <taxon>Cercopithecidae</taxon>
        <taxon>Cercopithecinae</taxon>
        <taxon>Macaca</taxon>
    </lineage>
</organism>
<keyword id="KW-0106">Calcium</keyword>
<keyword id="KW-0965">Cell junction</keyword>
<keyword id="KW-1003">Cell membrane</keyword>
<keyword id="KW-1015">Disulfide bond</keyword>
<keyword id="KW-0303">Gap junction</keyword>
<keyword id="KW-1009">Hearing</keyword>
<keyword id="KW-0472">Membrane</keyword>
<keyword id="KW-0479">Metal-binding</keyword>
<keyword id="KW-1185">Reference proteome</keyword>
<keyword id="KW-0812">Transmembrane</keyword>
<keyword id="KW-1133">Transmembrane helix</keyword>
<protein>
    <recommendedName>
        <fullName>Gap junction beta-2 protein</fullName>
    </recommendedName>
    <alternativeName>
        <fullName>Connexin-26</fullName>
        <shortName>Cx26</shortName>
    </alternativeName>
</protein>
<feature type="chain" id="PRO_0000057857" description="Gap junction beta-2 protein">
    <location>
        <begin position="1"/>
        <end position="226"/>
    </location>
</feature>
<feature type="intramembrane region" evidence="1">
    <location>
        <begin position="2"/>
        <end position="13"/>
    </location>
</feature>
<feature type="topological domain" description="Cytoplasmic" evidence="3">
    <location>
        <begin position="14"/>
        <end position="20"/>
    </location>
</feature>
<feature type="transmembrane region" description="Helical" evidence="1">
    <location>
        <begin position="21"/>
        <end position="40"/>
    </location>
</feature>
<feature type="topological domain" description="Extracellular" evidence="3">
    <location>
        <begin position="41"/>
        <end position="73"/>
    </location>
</feature>
<feature type="transmembrane region" description="Helical" evidence="1">
    <location>
        <begin position="74"/>
        <end position="94"/>
    </location>
</feature>
<feature type="topological domain" description="Cytoplasmic" evidence="3">
    <location>
        <begin position="95"/>
        <end position="135"/>
    </location>
</feature>
<feature type="transmembrane region" description="Helical" evidence="1">
    <location>
        <begin position="136"/>
        <end position="156"/>
    </location>
</feature>
<feature type="topological domain" description="Extracellular" evidence="3">
    <location>
        <begin position="157"/>
        <end position="189"/>
    </location>
</feature>
<feature type="transmembrane region" description="Helical" evidence="1">
    <location>
        <begin position="190"/>
        <end position="210"/>
    </location>
</feature>
<feature type="topological domain" description="Cytoplasmic" evidence="3">
    <location>
        <begin position="211"/>
        <end position="226"/>
    </location>
</feature>
<feature type="binding site" description="in other chain" evidence="1">
    <location>
        <position position="42"/>
    </location>
    <ligand>
        <name>Ca(2+)</name>
        <dbReference type="ChEBI" id="CHEBI:29108"/>
        <note>ligand shared between two neighboring subunits</note>
    </ligand>
</feature>
<feature type="binding site" evidence="1">
    <location>
        <position position="45"/>
    </location>
    <ligand>
        <name>Ca(2+)</name>
        <dbReference type="ChEBI" id="CHEBI:29108"/>
        <note>ligand shared between two neighboring subunits</note>
    </ligand>
</feature>
<feature type="binding site" evidence="1">
    <location>
        <position position="47"/>
    </location>
    <ligand>
        <name>Ca(2+)</name>
        <dbReference type="ChEBI" id="CHEBI:29108"/>
        <note>ligand shared between two neighboring subunits</note>
    </ligand>
</feature>
<feature type="disulfide bond" evidence="1">
    <location>
        <begin position="53"/>
        <end position="180"/>
    </location>
</feature>
<feature type="disulfide bond" evidence="1">
    <location>
        <begin position="60"/>
        <end position="174"/>
    </location>
</feature>
<feature type="disulfide bond" evidence="1">
    <location>
        <begin position="64"/>
        <end position="169"/>
    </location>
</feature>
<gene>
    <name type="primary">GJB2</name>
</gene>
<name>CXB2_MACMU</name>
<comment type="function">
    <text evidence="1">Structural component of gap junctions. Gap junctions are dodecameric channels that connect the cytoplasm of adjoining cells. They are formed by the docking of two hexameric hemichannels, one from each cell membrane. Small molecules and ions diffuse from one cell to a neighboring cell via the central pore.</text>
</comment>
<comment type="subunit">
    <text evidence="1 2">A hemichannel or connexon is composed of a hexamer of connexins. A functional gap junction is formed by the apposition of two hemichannels (By similarity). Forms heteromeric channels with GJB4. Interacts with CNST (By similarity).</text>
</comment>
<comment type="subcellular location">
    <subcellularLocation>
        <location evidence="2">Cell membrane</location>
        <topology evidence="1">Multi-pass membrane protein</topology>
    </subcellularLocation>
    <subcellularLocation>
        <location evidence="2">Cell junction</location>
        <location evidence="2">Gap junction</location>
    </subcellularLocation>
    <text evidence="2">Colocalizes with GJB4 at gap junction plaques in the cochlea.</text>
</comment>
<comment type="similarity">
    <text evidence="3">Belongs to the connexin family. Beta-type (group I) subfamily.</text>
</comment>
<proteinExistence type="inferred from homology"/>
<reference key="1">
    <citation type="submission" date="2001-07" db="EMBL/GenBank/DDBJ databases">
        <title>Sequence comparison of primate connexin 26 (GJB2) genes.</title>
        <authorList>
            <person name="Orten D.J."/>
            <person name="Bizzarri-Kriener C."/>
            <person name="Askew J.W."/>
            <person name="Li J.-L."/>
            <person name="Louis E."/>
            <person name="Kelley P.M."/>
            <person name="Kimberling W.J."/>
        </authorList>
    </citation>
    <scope>NUCLEOTIDE SEQUENCE [GENOMIC DNA]</scope>
</reference>
<dbReference type="EMBL" id="AY046584">
    <property type="protein sequence ID" value="AAL03976.1"/>
    <property type="molecule type" value="Genomic_DNA"/>
</dbReference>
<dbReference type="RefSeq" id="NP_001038200.1">
    <property type="nucleotide sequence ID" value="NM_001044735.1"/>
</dbReference>
<dbReference type="RefSeq" id="XP_014976159.1">
    <property type="nucleotide sequence ID" value="XM_015120673.2"/>
</dbReference>
<dbReference type="RefSeq" id="XP_014976160.1">
    <property type="nucleotide sequence ID" value="XM_015120674.2"/>
</dbReference>
<dbReference type="SMR" id="Q8MIT8"/>
<dbReference type="FunCoup" id="Q8MIT8">
    <property type="interactions" value="25"/>
</dbReference>
<dbReference type="STRING" id="9544.ENSMMUP00000013790"/>
<dbReference type="PaxDb" id="9544-ENSMMUP00000013790"/>
<dbReference type="Ensembl" id="ENSMMUT00000014720.4">
    <property type="protein sequence ID" value="ENSMMUP00000013790.2"/>
    <property type="gene ID" value="ENSMMUG00000010522.4"/>
</dbReference>
<dbReference type="GeneID" id="704224"/>
<dbReference type="KEGG" id="mcc:704224"/>
<dbReference type="CTD" id="2706"/>
<dbReference type="VEuPathDB" id="HostDB:ENSMMUG00000010522"/>
<dbReference type="VGNC" id="VGNC:73060">
    <property type="gene designation" value="GJB2"/>
</dbReference>
<dbReference type="eggNOG" id="ENOG502QWM8">
    <property type="taxonomic scope" value="Eukaryota"/>
</dbReference>
<dbReference type="GeneTree" id="ENSGT01030000234513"/>
<dbReference type="HOGENOM" id="CLU_037388_4_1_1"/>
<dbReference type="InParanoid" id="Q8MIT8"/>
<dbReference type="OMA" id="RMVKCNA"/>
<dbReference type="OrthoDB" id="8934037at2759"/>
<dbReference type="TreeFam" id="TF329606"/>
<dbReference type="Proteomes" id="UP000006718">
    <property type="component" value="Chromosome 17"/>
</dbReference>
<dbReference type="Bgee" id="ENSMMUG00000010522">
    <property type="expression patterns" value="Expressed in spermatocyte and 19 other cell types or tissues"/>
</dbReference>
<dbReference type="ExpressionAtlas" id="Q8MIT8">
    <property type="expression patterns" value="baseline"/>
</dbReference>
<dbReference type="GO" id="GO:0005922">
    <property type="term" value="C:connexin complex"/>
    <property type="evidence" value="ECO:0000250"/>
    <property type="project" value="UniProtKB"/>
</dbReference>
<dbReference type="GO" id="GO:0005886">
    <property type="term" value="C:plasma membrane"/>
    <property type="evidence" value="ECO:0000250"/>
    <property type="project" value="UniProtKB"/>
</dbReference>
<dbReference type="GO" id="GO:0005509">
    <property type="term" value="F:calcium ion binding"/>
    <property type="evidence" value="ECO:0000250"/>
    <property type="project" value="UniProtKB"/>
</dbReference>
<dbReference type="GO" id="GO:0005243">
    <property type="term" value="F:gap junction channel activity"/>
    <property type="evidence" value="ECO:0000250"/>
    <property type="project" value="UniProtKB"/>
</dbReference>
<dbReference type="GO" id="GO:1903763">
    <property type="term" value="F:gap junction channel activity involved in cell communication by electrical coupling"/>
    <property type="evidence" value="ECO:0007669"/>
    <property type="project" value="Ensembl"/>
</dbReference>
<dbReference type="GO" id="GO:0042802">
    <property type="term" value="F:identical protein binding"/>
    <property type="evidence" value="ECO:0007669"/>
    <property type="project" value="Ensembl"/>
</dbReference>
<dbReference type="GO" id="GO:0007267">
    <property type="term" value="P:cell-cell signaling"/>
    <property type="evidence" value="ECO:0000250"/>
    <property type="project" value="UniProtKB"/>
</dbReference>
<dbReference type="GO" id="GO:0016264">
    <property type="term" value="P:gap junction assembly"/>
    <property type="evidence" value="ECO:0007669"/>
    <property type="project" value="Ensembl"/>
</dbReference>
<dbReference type="GO" id="GO:1990349">
    <property type="term" value="P:gap junction-mediated intercellular transport"/>
    <property type="evidence" value="ECO:0000250"/>
    <property type="project" value="UniProtKB"/>
</dbReference>
<dbReference type="GO" id="GO:0007605">
    <property type="term" value="P:sensory perception of sound"/>
    <property type="evidence" value="ECO:0007669"/>
    <property type="project" value="UniProtKB-KW"/>
</dbReference>
<dbReference type="FunFam" id="1.20.1440.80:FF:000001">
    <property type="entry name" value="Gap junction alpha-1"/>
    <property type="match status" value="1"/>
</dbReference>
<dbReference type="Gene3D" id="1.20.1440.80">
    <property type="entry name" value="Gap junction channel protein cysteine-rich domain"/>
    <property type="match status" value="1"/>
</dbReference>
<dbReference type="InterPro" id="IPR000500">
    <property type="entry name" value="Connexin"/>
</dbReference>
<dbReference type="InterPro" id="IPR002268">
    <property type="entry name" value="Connexin26"/>
</dbReference>
<dbReference type="InterPro" id="IPR019570">
    <property type="entry name" value="Connexin_CCC"/>
</dbReference>
<dbReference type="InterPro" id="IPR017990">
    <property type="entry name" value="Connexin_CS"/>
</dbReference>
<dbReference type="InterPro" id="IPR013092">
    <property type="entry name" value="Connexin_N"/>
</dbReference>
<dbReference type="InterPro" id="IPR038359">
    <property type="entry name" value="Connexin_N_sf"/>
</dbReference>
<dbReference type="PANTHER" id="PTHR11984">
    <property type="entry name" value="CONNEXIN"/>
    <property type="match status" value="1"/>
</dbReference>
<dbReference type="PANTHER" id="PTHR11984:SF46">
    <property type="entry name" value="GAP JUNCTION BETA-2 PROTEIN"/>
    <property type="match status" value="1"/>
</dbReference>
<dbReference type="Pfam" id="PF00029">
    <property type="entry name" value="Connexin"/>
    <property type="match status" value="1"/>
</dbReference>
<dbReference type="PRINTS" id="PR00206">
    <property type="entry name" value="CONNEXIN"/>
</dbReference>
<dbReference type="PRINTS" id="PR01139">
    <property type="entry name" value="CONNEXINB2"/>
</dbReference>
<dbReference type="SMART" id="SM00037">
    <property type="entry name" value="CNX"/>
    <property type="match status" value="1"/>
</dbReference>
<dbReference type="SMART" id="SM01089">
    <property type="entry name" value="Connexin_CCC"/>
    <property type="match status" value="1"/>
</dbReference>
<dbReference type="PROSITE" id="PS00407">
    <property type="entry name" value="CONNEXINS_1"/>
    <property type="match status" value="1"/>
</dbReference>
<dbReference type="PROSITE" id="PS00408">
    <property type="entry name" value="CONNEXINS_2"/>
    <property type="match status" value="1"/>
</dbReference>